<sequence>MTTKRKPYVRPMTSTWWKKLPFYRFYMLREGTAVPAVWFSIELIFGLFALKHGAESWMGFVGFLQNPVVVILNLITLAAALLHTKTWFELAPKAANIIVKDEKMGPEPIIKGLWVVTAVVTVVILYVALFW</sequence>
<dbReference type="EMBL" id="AM933173">
    <property type="protein sequence ID" value="CAR39950.1"/>
    <property type="molecule type" value="Genomic_DNA"/>
</dbReference>
<dbReference type="RefSeq" id="WP_000208749.1">
    <property type="nucleotide sequence ID" value="NC_011274.1"/>
</dbReference>
<dbReference type="SMR" id="B5R9A2"/>
<dbReference type="KEGG" id="seg:SG4184"/>
<dbReference type="HOGENOM" id="CLU_156492_0_0_6"/>
<dbReference type="Proteomes" id="UP000008321">
    <property type="component" value="Chromosome"/>
</dbReference>
<dbReference type="GO" id="GO:0045283">
    <property type="term" value="C:fumarate reductase complex"/>
    <property type="evidence" value="ECO:0007669"/>
    <property type="project" value="UniProtKB-UniRule"/>
</dbReference>
<dbReference type="GO" id="GO:0005886">
    <property type="term" value="C:plasma membrane"/>
    <property type="evidence" value="ECO:0007669"/>
    <property type="project" value="UniProtKB-SubCell"/>
</dbReference>
<dbReference type="GO" id="GO:0000104">
    <property type="term" value="F:succinate dehydrogenase activity"/>
    <property type="evidence" value="ECO:0007669"/>
    <property type="project" value="UniProtKB-UniRule"/>
</dbReference>
<dbReference type="CDD" id="cd00546">
    <property type="entry name" value="QFR_TypeD_subunitC"/>
    <property type="match status" value="1"/>
</dbReference>
<dbReference type="Gene3D" id="1.20.1300.10">
    <property type="entry name" value="Fumarate reductase/succinate dehydrogenase, transmembrane subunit"/>
    <property type="match status" value="1"/>
</dbReference>
<dbReference type="HAMAP" id="MF_00708">
    <property type="entry name" value="Fumarate_red_C"/>
    <property type="match status" value="1"/>
</dbReference>
<dbReference type="InterPro" id="IPR003510">
    <property type="entry name" value="Fumarate_red_C"/>
</dbReference>
<dbReference type="InterPro" id="IPR034804">
    <property type="entry name" value="SQR/QFR_C/D"/>
</dbReference>
<dbReference type="NCBIfam" id="NF003445">
    <property type="entry name" value="PRK04987.1"/>
    <property type="match status" value="1"/>
</dbReference>
<dbReference type="Pfam" id="PF02300">
    <property type="entry name" value="Fumarate_red_C"/>
    <property type="match status" value="1"/>
</dbReference>
<dbReference type="PIRSF" id="PIRSF000180">
    <property type="entry name" value="FrdC"/>
    <property type="match status" value="1"/>
</dbReference>
<dbReference type="SUPFAM" id="SSF81343">
    <property type="entry name" value="Fumarate reductase respiratory complex transmembrane subunits"/>
    <property type="match status" value="1"/>
</dbReference>
<keyword id="KW-0997">Cell inner membrane</keyword>
<keyword id="KW-1003">Cell membrane</keyword>
<keyword id="KW-0472">Membrane</keyword>
<keyword id="KW-0812">Transmembrane</keyword>
<keyword id="KW-1133">Transmembrane helix</keyword>
<comment type="function">
    <text evidence="1">Two distinct, membrane-bound, FAD-containing enzymes are responsible for the catalysis of fumarate and succinate interconversion; fumarate reductase is used in anaerobic growth, and succinate dehydrogenase is used in aerobic growth. Anchors the catalytic components of the fumarate reductase complex to the cell inner membrane, binds quinones.</text>
</comment>
<comment type="subunit">
    <text evidence="1">Part of an enzyme complex containing four subunits: a flavoprotein (FrdA), an iron-sulfur protein (FrdB), and two hydrophobic anchor proteins (FrdC and FrdD).</text>
</comment>
<comment type="subcellular location">
    <subcellularLocation>
        <location evidence="1">Cell inner membrane</location>
        <topology evidence="1">Multi-pass membrane protein</topology>
    </subcellularLocation>
</comment>
<comment type="similarity">
    <text evidence="1">Belongs to the FrdC family.</text>
</comment>
<gene>
    <name evidence="1" type="primary">frdC</name>
    <name type="ordered locus">SG4184</name>
</gene>
<protein>
    <recommendedName>
        <fullName evidence="1">Fumarate reductase subunit C</fullName>
    </recommendedName>
    <alternativeName>
        <fullName evidence="1">Fumarate reductase 15 kDa hydrophobic protein</fullName>
    </alternativeName>
    <alternativeName>
        <fullName evidence="1">Quinol-fumarate reductase subunit C</fullName>
        <shortName evidence="1">QFR subunit C</shortName>
    </alternativeName>
</protein>
<reference key="1">
    <citation type="journal article" date="2008" name="Genome Res.">
        <title>Comparative genome analysis of Salmonella enteritidis PT4 and Salmonella gallinarum 287/91 provides insights into evolutionary and host adaptation pathways.</title>
        <authorList>
            <person name="Thomson N.R."/>
            <person name="Clayton D.J."/>
            <person name="Windhorst D."/>
            <person name="Vernikos G."/>
            <person name="Davidson S."/>
            <person name="Churcher C."/>
            <person name="Quail M.A."/>
            <person name="Stevens M."/>
            <person name="Jones M.A."/>
            <person name="Watson M."/>
            <person name="Barron A."/>
            <person name="Layton A."/>
            <person name="Pickard D."/>
            <person name="Kingsley R.A."/>
            <person name="Bignell A."/>
            <person name="Clark L."/>
            <person name="Harris B."/>
            <person name="Ormond D."/>
            <person name="Abdellah Z."/>
            <person name="Brooks K."/>
            <person name="Cherevach I."/>
            <person name="Chillingworth T."/>
            <person name="Woodward J."/>
            <person name="Norberczak H."/>
            <person name="Lord A."/>
            <person name="Arrowsmith C."/>
            <person name="Jagels K."/>
            <person name="Moule S."/>
            <person name="Mungall K."/>
            <person name="Saunders M."/>
            <person name="Whitehead S."/>
            <person name="Chabalgoity J.A."/>
            <person name="Maskell D."/>
            <person name="Humphreys T."/>
            <person name="Roberts M."/>
            <person name="Barrow P.A."/>
            <person name="Dougan G."/>
            <person name="Parkhill J."/>
        </authorList>
    </citation>
    <scope>NUCLEOTIDE SEQUENCE [LARGE SCALE GENOMIC DNA]</scope>
    <source>
        <strain>287/91 / NCTC 13346</strain>
    </source>
</reference>
<evidence type="ECO:0000255" key="1">
    <source>
        <dbReference type="HAMAP-Rule" id="MF_00708"/>
    </source>
</evidence>
<proteinExistence type="inferred from homology"/>
<name>FRDC_SALG2</name>
<feature type="chain" id="PRO_1000132383" description="Fumarate reductase subunit C">
    <location>
        <begin position="1"/>
        <end position="131"/>
    </location>
</feature>
<feature type="transmembrane region" description="Helical" evidence="1">
    <location>
        <begin position="30"/>
        <end position="50"/>
    </location>
</feature>
<feature type="transmembrane region" description="Helical" evidence="1">
    <location>
        <begin position="57"/>
        <end position="77"/>
    </location>
</feature>
<feature type="transmembrane region" description="Helical" evidence="1">
    <location>
        <begin position="109"/>
        <end position="129"/>
    </location>
</feature>
<organism>
    <name type="scientific">Salmonella gallinarum (strain 287/91 / NCTC 13346)</name>
    <dbReference type="NCBI Taxonomy" id="550538"/>
    <lineage>
        <taxon>Bacteria</taxon>
        <taxon>Pseudomonadati</taxon>
        <taxon>Pseudomonadota</taxon>
        <taxon>Gammaproteobacteria</taxon>
        <taxon>Enterobacterales</taxon>
        <taxon>Enterobacteriaceae</taxon>
        <taxon>Salmonella</taxon>
    </lineage>
</organism>
<accession>B5R9A2</accession>